<reference key="1">
    <citation type="journal article" date="1997" name="Gene">
        <title>Shigella flexneri type-specific antigen V: cloning, sequencing and characterization of the glucosyl transferase gene of temperate bacteriophage SfV.</title>
        <authorList>
            <person name="Huan P.T."/>
            <person name="Whittle B.L."/>
            <person name="Bastin D.A."/>
            <person name="Lindberg A.A."/>
            <person name="Verma N.K."/>
        </authorList>
    </citation>
    <scope>NUCLEOTIDE SEQUENCE [GENOMIC DNA]</scope>
</reference>
<reference key="2">
    <citation type="journal article" date="2002" name="J. Bacteriol.">
        <title>Complete genomic sequence of SfV, a serotype-converting temperate bacteriophage of Shigella flexneri.</title>
        <authorList>
            <person name="Allison G.E."/>
            <person name="Angeles D."/>
            <person name="Tran-Dinh N."/>
            <person name="Verma N.K."/>
        </authorList>
    </citation>
    <scope>NUCLEOTIDE SEQUENCE [LARGE SCALE GENOMIC DNA]</scope>
</reference>
<name>GTRB_BPSF5</name>
<organism>
    <name type="scientific">Shigella phage SfV</name>
    <name type="common">Shigella flexneri bacteriophage V</name>
    <name type="synonym">Bacteriophage SfV</name>
    <dbReference type="NCBI Taxonomy" id="55884"/>
    <lineage>
        <taxon>Viruses</taxon>
        <taxon>Duplodnaviria</taxon>
        <taxon>Heunggongvirae</taxon>
        <taxon>Uroviricota</taxon>
        <taxon>Caudoviricetes</taxon>
    </lineage>
</organism>
<comment type="function">
    <text>Involved in O antigen modification. Catalyzes the transfer of the glucose residue from UDP-glucose to a lipid carrier.</text>
</comment>
<comment type="subcellular location">
    <subcellularLocation>
        <location evidence="2">Host membrane</location>
        <topology evidence="2">Multi-pass membrane protein</topology>
    </subcellularLocation>
</comment>
<comment type="similarity">
    <text evidence="2">Belongs to the glycosyltransferase 2 family. GtrB subfamily.</text>
</comment>
<evidence type="ECO:0000255" key="1"/>
<evidence type="ECO:0000305" key="2"/>
<gene>
    <name type="primary">gtrB</name>
    <name type="synonym">24</name>
</gene>
<proteinExistence type="inferred from homology"/>
<organismHost>
    <name type="scientific">Shigella flexneri</name>
    <dbReference type="NCBI Taxonomy" id="623"/>
</organismHost>
<accession>O22007</accession>
<dbReference type="EC" id="2.4.1.-"/>
<dbReference type="EMBL" id="U82619">
    <property type="protein sequence ID" value="AAB72133.1"/>
    <property type="molecule type" value="Genomic_DNA"/>
</dbReference>
<dbReference type="RefSeq" id="NP_599056.1">
    <property type="nucleotide sequence ID" value="NC_003444.1"/>
</dbReference>
<dbReference type="SMR" id="O22007"/>
<dbReference type="CAZy" id="GT2">
    <property type="family name" value="Glycosyltransferase Family 2"/>
</dbReference>
<dbReference type="GeneID" id="935195"/>
<dbReference type="KEGG" id="vg:935195"/>
<dbReference type="OrthoDB" id="4790at10239"/>
<dbReference type="Proteomes" id="UP000009068">
    <property type="component" value="Genome"/>
</dbReference>
<dbReference type="GO" id="GO:0033644">
    <property type="term" value="C:host cell membrane"/>
    <property type="evidence" value="ECO:0007669"/>
    <property type="project" value="UniProtKB-SubCell"/>
</dbReference>
<dbReference type="GO" id="GO:0005886">
    <property type="term" value="C:plasma membrane"/>
    <property type="evidence" value="ECO:0007669"/>
    <property type="project" value="TreeGrafter"/>
</dbReference>
<dbReference type="GO" id="GO:0016757">
    <property type="term" value="F:glycosyltransferase activity"/>
    <property type="evidence" value="ECO:0007669"/>
    <property type="project" value="UniProtKB-KW"/>
</dbReference>
<dbReference type="CDD" id="cd04187">
    <property type="entry name" value="DPM1_like_bac"/>
    <property type="match status" value="1"/>
</dbReference>
<dbReference type="FunFam" id="3.90.550.10:FF:000099">
    <property type="entry name" value="Bactoprenol glucosyl transferase"/>
    <property type="match status" value="1"/>
</dbReference>
<dbReference type="Gene3D" id="3.90.550.10">
    <property type="entry name" value="Spore Coat Polysaccharide Biosynthesis Protein SpsA, Chain A"/>
    <property type="match status" value="1"/>
</dbReference>
<dbReference type="InterPro" id="IPR001173">
    <property type="entry name" value="Glyco_trans_2-like"/>
</dbReference>
<dbReference type="InterPro" id="IPR050256">
    <property type="entry name" value="Glycosyltransferase_2"/>
</dbReference>
<dbReference type="InterPro" id="IPR029044">
    <property type="entry name" value="Nucleotide-diphossugar_trans"/>
</dbReference>
<dbReference type="PANTHER" id="PTHR48090:SF1">
    <property type="entry name" value="PROPHAGE BACTOPRENOL GLUCOSYL TRANSFERASE HOMOLOG"/>
    <property type="match status" value="1"/>
</dbReference>
<dbReference type="PANTHER" id="PTHR48090">
    <property type="entry name" value="UNDECAPRENYL-PHOSPHATE 4-DEOXY-4-FORMAMIDO-L-ARABINOSE TRANSFERASE-RELATED"/>
    <property type="match status" value="1"/>
</dbReference>
<dbReference type="Pfam" id="PF00535">
    <property type="entry name" value="Glycos_transf_2"/>
    <property type="match status" value="1"/>
</dbReference>
<dbReference type="SUPFAM" id="SSF53448">
    <property type="entry name" value="Nucleotide-diphospho-sugar transferases"/>
    <property type="match status" value="1"/>
</dbReference>
<protein>
    <recommendedName>
        <fullName>Bactoprenol glucosyl transferase</fullName>
        <ecNumber>2.4.1.-</ecNumber>
    </recommendedName>
</protein>
<keyword id="KW-0328">Glycosyltransferase</keyword>
<keyword id="KW-1043">Host membrane</keyword>
<keyword id="KW-0472">Membrane</keyword>
<keyword id="KW-1185">Reference proteome</keyword>
<keyword id="KW-0808">Transferase</keyword>
<keyword id="KW-0812">Transmembrane</keyword>
<keyword id="KW-1133">Transmembrane helix</keyword>
<feature type="chain" id="PRO_0000059192" description="Bactoprenol glucosyl transferase">
    <location>
        <begin position="1"/>
        <end position="307"/>
    </location>
</feature>
<feature type="transmembrane region" description="Helical" evidence="1">
    <location>
        <begin position="229"/>
        <end position="249"/>
    </location>
</feature>
<feature type="transmembrane region" description="Helical" evidence="1">
    <location>
        <begin position="263"/>
        <end position="283"/>
    </location>
</feature>
<sequence length="307" mass="34708">MKISLVVPVFNEEEAIPVFYKTVREFQELKPYEVEIVFINDGSKDATESIINALAVSDPLVVPLSFTRNFGKEPALFAGLDHASGDAVIPIDVDLQDPIEVIPHLIEKWQAGADMVLAKRSDRSTDGRLKRKTAEWFYKLHNKISTPKIEENVGDFRLMSREVVENIKLLPERNLFMKGILSWVGGQTDVVEYVRAERVAGISKFNGWKLWNLALEGITSFSTFPLRVWTYIGLFVASISFLYGAWMIIDTLVFGNPVRGYPSLLVSILFLGGVQLIGIGVLGEYIGRIYIESKHRPKYIIKNEKQK</sequence>